<proteinExistence type="evidence at protein level"/>
<comment type="function">
    <text evidence="1">Monomeric heme protein which primary function is to store oxygen and facilitate its diffusion within muscle tissues. Reversibly binds oxygen through a pentacoordinated heme iron and enables its timely and efficient release as needed during periods of heightened demand. Depending on the oxidative conditions of tissues and cells, and in addition to its ability to bind oxygen, it also has a nitrite reductase activity whereby it regulates the production of bioactive nitric oxide. Under stress conditions, like hypoxia and anoxia, it also protects cells against reactive oxygen species thanks to its pseudoperoxidase activity.</text>
</comment>
<comment type="catalytic activity">
    <reaction evidence="1">
        <text>Fe(III)-heme b-[protein] + nitric oxide + H2O = Fe(II)-heme b-[protein] + nitrite + 2 H(+)</text>
        <dbReference type="Rhea" id="RHEA:77711"/>
        <dbReference type="Rhea" id="RHEA-COMP:18975"/>
        <dbReference type="Rhea" id="RHEA-COMP:18976"/>
        <dbReference type="ChEBI" id="CHEBI:15377"/>
        <dbReference type="ChEBI" id="CHEBI:15378"/>
        <dbReference type="ChEBI" id="CHEBI:16301"/>
        <dbReference type="ChEBI" id="CHEBI:16480"/>
        <dbReference type="ChEBI" id="CHEBI:55376"/>
        <dbReference type="ChEBI" id="CHEBI:60344"/>
    </reaction>
    <physiologicalReaction direction="right-to-left" evidence="1">
        <dbReference type="Rhea" id="RHEA:77713"/>
    </physiologicalReaction>
</comment>
<comment type="catalytic activity">
    <reaction evidence="1">
        <text>H2O2 + AH2 = A + 2 H2O</text>
        <dbReference type="Rhea" id="RHEA:30275"/>
        <dbReference type="ChEBI" id="CHEBI:13193"/>
        <dbReference type="ChEBI" id="CHEBI:15377"/>
        <dbReference type="ChEBI" id="CHEBI:16240"/>
        <dbReference type="ChEBI" id="CHEBI:17499"/>
    </reaction>
</comment>
<comment type="subunit">
    <text evidence="2">Monomeric.</text>
</comment>
<comment type="subcellular location">
    <subcellularLocation>
        <location evidence="1">Cytoplasm</location>
        <location evidence="1">Sarcoplasm</location>
    </subcellularLocation>
</comment>
<comment type="similarity">
    <text evidence="5">Belongs to the globin family.</text>
</comment>
<evidence type="ECO:0000250" key="1">
    <source>
        <dbReference type="UniProtKB" id="P02144"/>
    </source>
</evidence>
<evidence type="ECO:0000250" key="2">
    <source>
        <dbReference type="UniProtKB" id="P02185"/>
    </source>
</evidence>
<evidence type="ECO:0000250" key="3">
    <source>
        <dbReference type="UniProtKB" id="P02189"/>
    </source>
</evidence>
<evidence type="ECO:0000250" key="4">
    <source>
        <dbReference type="UniProtKB" id="P68082"/>
    </source>
</evidence>
<evidence type="ECO:0000255" key="5">
    <source>
        <dbReference type="PROSITE-ProRule" id="PRU00238"/>
    </source>
</evidence>
<evidence type="ECO:0000269" key="6">
    <source>
    </source>
</evidence>
<reference key="1">
    <citation type="journal article" date="1981" name="J. Biol. Chem.">
        <title>Amino acid sequence of a myoglobin isolated from map turtle, Graptemys geographica.</title>
        <authorList>
            <person name="Maeda N."/>
            <person name="Fitch W.M."/>
        </authorList>
    </citation>
    <scope>PROTEIN SEQUENCE OF 2-154</scope>
</reference>
<accession>P02201</accession>
<dbReference type="EC" id="1.7.-.-" evidence="1"/>
<dbReference type="EC" id="1.11.1.-" evidence="1"/>
<dbReference type="PIR" id="A02522">
    <property type="entry name" value="MYTTM"/>
</dbReference>
<dbReference type="SMR" id="P02201"/>
<dbReference type="GO" id="GO:0070062">
    <property type="term" value="C:extracellular exosome"/>
    <property type="evidence" value="ECO:0007669"/>
    <property type="project" value="TreeGrafter"/>
</dbReference>
<dbReference type="GO" id="GO:0016528">
    <property type="term" value="C:sarcoplasm"/>
    <property type="evidence" value="ECO:0000250"/>
    <property type="project" value="UniProtKB"/>
</dbReference>
<dbReference type="GO" id="GO:0020037">
    <property type="term" value="F:heme binding"/>
    <property type="evidence" value="ECO:0007669"/>
    <property type="project" value="InterPro"/>
</dbReference>
<dbReference type="GO" id="GO:0046872">
    <property type="term" value="F:metal ion binding"/>
    <property type="evidence" value="ECO:0007669"/>
    <property type="project" value="UniProtKB-KW"/>
</dbReference>
<dbReference type="GO" id="GO:0098809">
    <property type="term" value="F:nitrite reductase activity"/>
    <property type="evidence" value="ECO:0000250"/>
    <property type="project" value="UniProtKB"/>
</dbReference>
<dbReference type="GO" id="GO:0019825">
    <property type="term" value="F:oxygen binding"/>
    <property type="evidence" value="ECO:0007669"/>
    <property type="project" value="InterPro"/>
</dbReference>
<dbReference type="GO" id="GO:0005344">
    <property type="term" value="F:oxygen carrier activity"/>
    <property type="evidence" value="ECO:0000250"/>
    <property type="project" value="UniProtKB"/>
</dbReference>
<dbReference type="GO" id="GO:0004601">
    <property type="term" value="F:peroxidase activity"/>
    <property type="evidence" value="ECO:0000250"/>
    <property type="project" value="UniProtKB"/>
</dbReference>
<dbReference type="GO" id="GO:0019430">
    <property type="term" value="P:removal of superoxide radicals"/>
    <property type="evidence" value="ECO:0000250"/>
    <property type="project" value="UniProtKB"/>
</dbReference>
<dbReference type="CDD" id="cd08926">
    <property type="entry name" value="Mb"/>
    <property type="match status" value="1"/>
</dbReference>
<dbReference type="Gene3D" id="6.10.140.2100">
    <property type="match status" value="1"/>
</dbReference>
<dbReference type="Gene3D" id="6.10.140.2110">
    <property type="match status" value="1"/>
</dbReference>
<dbReference type="InterPro" id="IPR000971">
    <property type="entry name" value="Globin"/>
</dbReference>
<dbReference type="InterPro" id="IPR009050">
    <property type="entry name" value="Globin-like_sf"/>
</dbReference>
<dbReference type="InterPro" id="IPR002335">
    <property type="entry name" value="Myoglobin"/>
</dbReference>
<dbReference type="PANTHER" id="PTHR47132">
    <property type="entry name" value="MYOGLOBIN"/>
    <property type="match status" value="1"/>
</dbReference>
<dbReference type="PANTHER" id="PTHR47132:SF1">
    <property type="entry name" value="MYOGLOBIN"/>
    <property type="match status" value="1"/>
</dbReference>
<dbReference type="Pfam" id="PF00042">
    <property type="entry name" value="Globin"/>
    <property type="match status" value="1"/>
</dbReference>
<dbReference type="PRINTS" id="PR00613">
    <property type="entry name" value="MYOGLOBIN"/>
</dbReference>
<dbReference type="SUPFAM" id="SSF46458">
    <property type="entry name" value="Globin-like"/>
    <property type="match status" value="1"/>
</dbReference>
<dbReference type="PROSITE" id="PS01033">
    <property type="entry name" value="GLOBIN"/>
    <property type="match status" value="1"/>
</dbReference>
<keyword id="KW-0963">Cytoplasm</keyword>
<keyword id="KW-0903">Direct protein sequencing</keyword>
<keyword id="KW-0349">Heme</keyword>
<keyword id="KW-0408">Iron</keyword>
<keyword id="KW-0479">Metal-binding</keyword>
<keyword id="KW-0514">Muscle protein</keyword>
<keyword id="KW-0560">Oxidoreductase</keyword>
<keyword id="KW-0561">Oxygen transport</keyword>
<keyword id="KW-0813">Transport</keyword>
<organism>
    <name type="scientific">Graptemys geographica</name>
    <name type="common">Common map turtle</name>
    <name type="synonym">Testudo geographica</name>
    <dbReference type="NCBI Taxonomy" id="8481"/>
    <lineage>
        <taxon>Eukaryota</taxon>
        <taxon>Metazoa</taxon>
        <taxon>Chordata</taxon>
        <taxon>Craniata</taxon>
        <taxon>Vertebrata</taxon>
        <taxon>Euteleostomi</taxon>
        <taxon>Archelosauria</taxon>
        <taxon>Testudinata</taxon>
        <taxon>Testudines</taxon>
        <taxon>Cryptodira</taxon>
        <taxon>Durocryptodira</taxon>
        <taxon>Testudinoidea</taxon>
        <taxon>Emydidae</taxon>
        <taxon>Graptemys</taxon>
    </lineage>
</organism>
<gene>
    <name type="primary">MB</name>
</gene>
<sequence>MGLSDDEWHHVLGIWAKVEPDLSAHGQEVIIRLFQVHPETQERFAKFKNLKTIDELRSSEEVKKHGTTVLTALGRILKLKNNHEPELKPLAESHATKHKIPVKYLEFICEIIVKVIAEKHPSDFGADSQAAMRKALELFRNDMASKYKEFGFQG</sequence>
<name>MYG_GRAGE</name>
<protein>
    <recommendedName>
        <fullName>Myoglobin</fullName>
    </recommendedName>
    <alternativeName>
        <fullName evidence="1">Nitrite reductase MB</fullName>
        <ecNumber evidence="1">1.7.-.-</ecNumber>
    </alternativeName>
    <alternativeName>
        <fullName evidence="1">Pseudoperoxidase MB</fullName>
        <ecNumber evidence="1">1.11.1.-</ecNumber>
    </alternativeName>
</protein>
<feature type="initiator methionine" description="Removed" evidence="6">
    <location>
        <position position="1"/>
    </location>
</feature>
<feature type="chain" id="PRO_0000053382" description="Myoglobin">
    <location>
        <begin position="2"/>
        <end position="154"/>
    </location>
</feature>
<feature type="domain" description="Globin" evidence="5">
    <location>
        <begin position="2"/>
        <end position="148"/>
    </location>
</feature>
<feature type="binding site" evidence="4">
    <location>
        <position position="65"/>
    </location>
    <ligand>
        <name>nitrite</name>
        <dbReference type="ChEBI" id="CHEBI:16301"/>
    </ligand>
</feature>
<feature type="binding site" evidence="3 5">
    <location>
        <position position="65"/>
    </location>
    <ligand>
        <name>O2</name>
        <dbReference type="ChEBI" id="CHEBI:15379"/>
    </ligand>
</feature>
<feature type="binding site" description="proximal binding residue" evidence="1">
    <location>
        <position position="94"/>
    </location>
    <ligand>
        <name>heme b</name>
        <dbReference type="ChEBI" id="CHEBI:60344"/>
    </ligand>
    <ligandPart>
        <name>Fe</name>
        <dbReference type="ChEBI" id="CHEBI:18248"/>
    </ligandPart>
</feature>